<feature type="chain" id="PRO_0000452000" description="Homeobox protein ceh-17">
    <location>
        <begin position="1"/>
        <end position="237"/>
    </location>
</feature>
<feature type="DNA-binding region" description="Homeobox" evidence="1">
    <location>
        <begin position="149"/>
        <end position="208"/>
    </location>
</feature>
<feature type="region of interest" description="Disordered" evidence="3">
    <location>
        <begin position="58"/>
        <end position="82"/>
    </location>
</feature>
<feature type="compositionally biased region" description="Low complexity" evidence="3">
    <location>
        <begin position="62"/>
        <end position="82"/>
    </location>
</feature>
<reference evidence="7" key="1">
    <citation type="journal article" date="2000" name="Development">
        <title>The homeodomain protein CePHOX2/CEH-17 controls antero-posterior axonal growth in C. elegans.</title>
        <authorList>
            <person name="Pujol N."/>
            <person name="Torregrossa P."/>
            <person name="Ewbank J.J."/>
            <person name="Brunet J.F."/>
        </authorList>
    </citation>
    <scope>NUCLEOTIDE SEQUENCE [MRNA]</scope>
    <scope>FUNCTION</scope>
    <scope>SUBCELLULAR LOCATION</scope>
    <scope>DEVELOPMENTAL STAGE</scope>
    <scope>DISRUPTION PHENOTYPE</scope>
</reference>
<reference evidence="8" key="2">
    <citation type="journal article" date="1998" name="Science">
        <title>Genome sequence of the nematode C. elegans: a platform for investigating biology.</title>
        <authorList>
            <consortium name="The C. elegans sequencing consortium"/>
        </authorList>
    </citation>
    <scope>NUCLEOTIDE SEQUENCE [LARGE SCALE GENOMIC DNA]</scope>
    <source>
        <strain evidence="8">Bristol N2</strain>
    </source>
</reference>
<reference evidence="6" key="3">
    <citation type="journal article" date="2010" name="Development">
        <title>Paired and LIM class homeodomain proteins coordinate differentiation of the C. elegans ALA neuron.</title>
        <authorList>
            <person name="Van Buskirk C."/>
            <person name="Sternberg P.W."/>
        </authorList>
    </citation>
    <scope>FUNCTION</scope>
    <scope>DISRUPTION PHENOTYPE</scope>
</reference>
<proteinExistence type="evidence at protein level"/>
<keyword id="KW-0238">DNA-binding</keyword>
<keyword id="KW-0371">Homeobox</keyword>
<keyword id="KW-0524">Neurogenesis</keyword>
<keyword id="KW-0539">Nucleus</keyword>
<keyword id="KW-1185">Reference proteome</keyword>
<keyword id="KW-0804">Transcription</keyword>
<keyword id="KW-0805">Transcription regulation</keyword>
<gene>
    <name evidence="9" type="primary">ceh-17</name>
    <name evidence="9" type="ORF">D1007.1</name>
</gene>
<comment type="function">
    <text evidence="4 5">Probable transcription factor involved in postembryonic differentiation of the ALA neuron, and regulation of genes that contribute to behavioral quiescence, a sleep-like behavior mediated by ALA (PubMed:20501595). Regulates its own expression and also that of homeodomain ceh-14, together forming an autoregulatory loop in the ALA neuron (PubMed:20501595). Involved in fasciculation-independent longitudinal axonal navigation in many neurons (PubMed:10887091).</text>
</comment>
<comment type="interaction">
    <interactant intactId="EBI-2316478">
        <id>G5EC89</id>
    </interactant>
    <interactant intactId="EBI-2315822">
        <id>Q7K7J0</id>
        <label>gei-18</label>
    </interactant>
    <organismsDiffer>false</organismsDiffer>
    <experiments>4</experiments>
</comment>
<comment type="interaction">
    <interactant intactId="EBI-2316478">
        <id>G5EC89</id>
    </interactant>
    <interactant intactId="EBI-325337">
        <id>G5EC32</id>
        <label>sorb-1</label>
    </interactant>
    <organismsDiffer>false</organismsDiffer>
    <experiments>4</experiments>
</comment>
<comment type="subcellular location">
    <subcellularLocation>
        <location evidence="1 2 4">Nucleus</location>
    </subcellularLocation>
</comment>
<comment type="developmental stage">
    <text evidence="4">Expressed at the L1 larval stage in five neurons of the ring ganglia; a dorsal neuron, ALA, and four ventral SIA neurons (SIADR, SIADL, SIAVR and SIAVL) (at protein level) (PubMed:10887091). Earliest expression is at the end of gastrulation (PubMed:10887091). Expressed at the comma stage, in two dorsal neurons in the head, and in six cells on the ventral side of the head, just anterior to the excretory pore (PubMed:10887091).</text>
</comment>
<comment type="disruption phenotype">
    <text evidence="4 5">ALA and SIA axons exhibit outgrowth abnormalities, failing to run along the lateral cord to the tail (PubMed:10887091). ALA axons are shortened further in a vab-8 mutant background (PubMed:10887091). Drastically reduced expression of let-23/EGFR and plc-3/PLCgamma in ALA neurons (PubMed:20501595). RNAi-mediated knockdown causes severe defects in the ALA neuron in young adults (PubMed:20501595).</text>
</comment>
<comment type="similarity">
    <text evidence="6">Belongs to the paired homeobox family.</text>
</comment>
<evidence type="ECO:0000255" key="1">
    <source>
        <dbReference type="PROSITE-ProRule" id="PRU00108"/>
    </source>
</evidence>
<evidence type="ECO:0000255" key="2">
    <source>
        <dbReference type="RuleBase" id="RU000682"/>
    </source>
</evidence>
<evidence type="ECO:0000256" key="3">
    <source>
        <dbReference type="SAM" id="MobiDB-lite"/>
    </source>
</evidence>
<evidence type="ECO:0000269" key="4">
    <source>
    </source>
</evidence>
<evidence type="ECO:0000269" key="5">
    <source>
    </source>
</evidence>
<evidence type="ECO:0000305" key="6"/>
<evidence type="ECO:0000312" key="7">
    <source>
        <dbReference type="EMBL" id="AAF76229.1"/>
    </source>
</evidence>
<evidence type="ECO:0000312" key="8">
    <source>
        <dbReference type="Proteomes" id="UP000001940"/>
    </source>
</evidence>
<evidence type="ECO:0000312" key="9">
    <source>
        <dbReference type="WormBase" id="D1007.1"/>
    </source>
</evidence>
<protein>
    <recommendedName>
        <fullName evidence="6">Homeobox protein ceh-17</fullName>
    </recommendedName>
</protein>
<accession>G5EC89</accession>
<name>CEH17_CAEEL</name>
<organism evidence="8">
    <name type="scientific">Caenorhabditis elegans</name>
    <dbReference type="NCBI Taxonomy" id="6239"/>
    <lineage>
        <taxon>Eukaryota</taxon>
        <taxon>Metazoa</taxon>
        <taxon>Ecdysozoa</taxon>
        <taxon>Nematoda</taxon>
        <taxon>Chromadorea</taxon>
        <taxon>Rhabditida</taxon>
        <taxon>Rhabditina</taxon>
        <taxon>Rhabditomorpha</taxon>
        <taxon>Rhabditoidea</taxon>
        <taxon>Rhabditidae</taxon>
        <taxon>Peloderinae</taxon>
        <taxon>Caenorhabditis</taxon>
    </lineage>
</organism>
<dbReference type="EMBL" id="AF272397">
    <property type="protein sequence ID" value="AAF76229.1"/>
    <property type="molecule type" value="mRNA"/>
</dbReference>
<dbReference type="EMBL" id="BX284601">
    <property type="protein sequence ID" value="CCD67311.1"/>
    <property type="molecule type" value="Genomic_DNA"/>
</dbReference>
<dbReference type="PIR" id="T30920">
    <property type="entry name" value="T30920"/>
</dbReference>
<dbReference type="RefSeq" id="NP_491393.1">
    <property type="nucleotide sequence ID" value="NM_058992.6"/>
</dbReference>
<dbReference type="SMR" id="G5EC89"/>
<dbReference type="FunCoup" id="G5EC89">
    <property type="interactions" value="319"/>
</dbReference>
<dbReference type="IntAct" id="G5EC89">
    <property type="interactions" value="4"/>
</dbReference>
<dbReference type="STRING" id="6239.D1007.1.1"/>
<dbReference type="PaxDb" id="6239-D1007.1"/>
<dbReference type="EnsemblMetazoa" id="D1007.1.1">
    <property type="protein sequence ID" value="D1007.1.1"/>
    <property type="gene ID" value="WBGene00000440"/>
</dbReference>
<dbReference type="GeneID" id="172059"/>
<dbReference type="KEGG" id="cel:CELE_D1007.1"/>
<dbReference type="AGR" id="WB:WBGene00000440"/>
<dbReference type="CTD" id="172059"/>
<dbReference type="WormBase" id="D1007.1">
    <property type="protein sequence ID" value="CE09036"/>
    <property type="gene ID" value="WBGene00000440"/>
    <property type="gene designation" value="ceh-17"/>
</dbReference>
<dbReference type="eggNOG" id="KOG0484">
    <property type="taxonomic scope" value="Eukaryota"/>
</dbReference>
<dbReference type="GeneTree" id="ENSGT00940000161147"/>
<dbReference type="HOGENOM" id="CLU_1200736_0_0_1"/>
<dbReference type="InParanoid" id="G5EC89"/>
<dbReference type="OMA" id="MDYGGYF"/>
<dbReference type="OrthoDB" id="6159439at2759"/>
<dbReference type="PhylomeDB" id="G5EC89"/>
<dbReference type="PRO" id="PR:G5EC89"/>
<dbReference type="Proteomes" id="UP000001940">
    <property type="component" value="Chromosome I"/>
</dbReference>
<dbReference type="Bgee" id="WBGene00000440">
    <property type="expression patterns" value="Expressed in pharyngeal muscle cell (C elegans) and 2 other cell types or tissues"/>
</dbReference>
<dbReference type="GO" id="GO:0005634">
    <property type="term" value="C:nucleus"/>
    <property type="evidence" value="ECO:0000314"/>
    <property type="project" value="WormBase"/>
</dbReference>
<dbReference type="GO" id="GO:0001228">
    <property type="term" value="F:DNA-binding transcription activator activity, RNA polymerase II-specific"/>
    <property type="evidence" value="ECO:0000314"/>
    <property type="project" value="WormBase"/>
</dbReference>
<dbReference type="GO" id="GO:0003700">
    <property type="term" value="F:DNA-binding transcription factor activity"/>
    <property type="evidence" value="ECO:0000304"/>
    <property type="project" value="WormBase"/>
</dbReference>
<dbReference type="GO" id="GO:0000981">
    <property type="term" value="F:DNA-binding transcription factor activity, RNA polymerase II-specific"/>
    <property type="evidence" value="ECO:0000318"/>
    <property type="project" value="GO_Central"/>
</dbReference>
<dbReference type="GO" id="GO:0000977">
    <property type="term" value="F:RNA polymerase II transcription regulatory region sequence-specific DNA binding"/>
    <property type="evidence" value="ECO:0000318"/>
    <property type="project" value="GO_Central"/>
</dbReference>
<dbReference type="GO" id="GO:0007411">
    <property type="term" value="P:axon guidance"/>
    <property type="evidence" value="ECO:0000315"/>
    <property type="project" value="WormBase"/>
</dbReference>
<dbReference type="GO" id="GO:0048666">
    <property type="term" value="P:neuron development"/>
    <property type="evidence" value="ECO:0000315"/>
    <property type="project" value="WormBase"/>
</dbReference>
<dbReference type="GO" id="GO:0045944">
    <property type="term" value="P:positive regulation of transcription by RNA polymerase II"/>
    <property type="evidence" value="ECO:0000314"/>
    <property type="project" value="WormBase"/>
</dbReference>
<dbReference type="GO" id="GO:0030516">
    <property type="term" value="P:regulation of axon extension"/>
    <property type="evidence" value="ECO:0000315"/>
    <property type="project" value="WormBase"/>
</dbReference>
<dbReference type="GO" id="GO:0006357">
    <property type="term" value="P:regulation of transcription by RNA polymerase II"/>
    <property type="evidence" value="ECO:0000318"/>
    <property type="project" value="GO_Central"/>
</dbReference>
<dbReference type="CDD" id="cd00086">
    <property type="entry name" value="homeodomain"/>
    <property type="match status" value="1"/>
</dbReference>
<dbReference type="FunFam" id="1.10.10.60:FF:000182">
    <property type="entry name" value="Paired like homeobox 2B"/>
    <property type="match status" value="1"/>
</dbReference>
<dbReference type="Gene3D" id="1.10.10.60">
    <property type="entry name" value="Homeodomain-like"/>
    <property type="match status" value="1"/>
</dbReference>
<dbReference type="InterPro" id="IPR022135">
    <property type="entry name" value="Distal-less_N"/>
</dbReference>
<dbReference type="InterPro" id="IPR001356">
    <property type="entry name" value="HD"/>
</dbReference>
<dbReference type="InterPro" id="IPR017970">
    <property type="entry name" value="Homeobox_CS"/>
</dbReference>
<dbReference type="InterPro" id="IPR009057">
    <property type="entry name" value="Homeodomain-like_sf"/>
</dbReference>
<dbReference type="InterPro" id="IPR050649">
    <property type="entry name" value="Paired_Homeobox_TFs"/>
</dbReference>
<dbReference type="PANTHER" id="PTHR24329:SF543">
    <property type="entry name" value="FI01017P-RELATED"/>
    <property type="match status" value="1"/>
</dbReference>
<dbReference type="PANTHER" id="PTHR24329">
    <property type="entry name" value="HOMEOBOX PROTEIN ARISTALESS"/>
    <property type="match status" value="1"/>
</dbReference>
<dbReference type="Pfam" id="PF12413">
    <property type="entry name" value="DLL_N"/>
    <property type="match status" value="1"/>
</dbReference>
<dbReference type="Pfam" id="PF00046">
    <property type="entry name" value="Homeodomain"/>
    <property type="match status" value="1"/>
</dbReference>
<dbReference type="SMART" id="SM00389">
    <property type="entry name" value="HOX"/>
    <property type="match status" value="1"/>
</dbReference>
<dbReference type="SUPFAM" id="SSF46689">
    <property type="entry name" value="Homeodomain-like"/>
    <property type="match status" value="1"/>
</dbReference>
<dbReference type="PROSITE" id="PS00027">
    <property type="entry name" value="HOMEOBOX_1"/>
    <property type="match status" value="1"/>
</dbReference>
<dbReference type="PROSITE" id="PS50071">
    <property type="entry name" value="HOMEOBOX_2"/>
    <property type="match status" value="1"/>
</dbReference>
<sequence length="237" mass="26704">MMMEYGGYFSSSAVAQQSGDVPTTAPSAVTNSFFYTPQSHNIYHQYATPYLQSGRALTTAHNTSSSSAGNSTSSSSSSSNYRNTTHDSLQAFFNTGLQYQLYQKSQLIGSDTIQRTSSNVLNGLPRSSLVGALCSTGGAPLNPAERRKQRRIRTTFTSGQLKELERSFCETHYPDIYTREEIAMRIDLTEARVQVWFQNRRAKYRKQEKIRRVKDEEEDPLKKEPGQISLEEIIDQI</sequence>